<name>RS4_CLAM3</name>
<accession>A5CRZ7</accession>
<proteinExistence type="inferred from homology"/>
<gene>
    <name evidence="1" type="primary">rpsD</name>
    <name type="ordered locus">CMM_1804</name>
</gene>
<dbReference type="EMBL" id="AM711867">
    <property type="protein sequence ID" value="CAN01860.1"/>
    <property type="molecule type" value="Genomic_DNA"/>
</dbReference>
<dbReference type="RefSeq" id="WP_012038492.1">
    <property type="nucleotide sequence ID" value="NC_009480.1"/>
</dbReference>
<dbReference type="SMR" id="A5CRZ7"/>
<dbReference type="GeneID" id="92947791"/>
<dbReference type="KEGG" id="cmi:CMM_1804"/>
<dbReference type="eggNOG" id="COG0522">
    <property type="taxonomic scope" value="Bacteria"/>
</dbReference>
<dbReference type="HOGENOM" id="CLU_092403_0_3_11"/>
<dbReference type="OrthoDB" id="9803672at2"/>
<dbReference type="Proteomes" id="UP000001564">
    <property type="component" value="Chromosome"/>
</dbReference>
<dbReference type="GO" id="GO:0015935">
    <property type="term" value="C:small ribosomal subunit"/>
    <property type="evidence" value="ECO:0007669"/>
    <property type="project" value="InterPro"/>
</dbReference>
<dbReference type="GO" id="GO:0019843">
    <property type="term" value="F:rRNA binding"/>
    <property type="evidence" value="ECO:0007669"/>
    <property type="project" value="UniProtKB-UniRule"/>
</dbReference>
<dbReference type="GO" id="GO:0003735">
    <property type="term" value="F:structural constituent of ribosome"/>
    <property type="evidence" value="ECO:0007669"/>
    <property type="project" value="InterPro"/>
</dbReference>
<dbReference type="GO" id="GO:0042274">
    <property type="term" value="P:ribosomal small subunit biogenesis"/>
    <property type="evidence" value="ECO:0007669"/>
    <property type="project" value="TreeGrafter"/>
</dbReference>
<dbReference type="GO" id="GO:0006412">
    <property type="term" value="P:translation"/>
    <property type="evidence" value="ECO:0007669"/>
    <property type="project" value="UniProtKB-UniRule"/>
</dbReference>
<dbReference type="CDD" id="cd00165">
    <property type="entry name" value="S4"/>
    <property type="match status" value="1"/>
</dbReference>
<dbReference type="FunFam" id="3.10.290.10:FF:000001">
    <property type="entry name" value="30S ribosomal protein S4"/>
    <property type="match status" value="1"/>
</dbReference>
<dbReference type="Gene3D" id="1.10.1050.10">
    <property type="entry name" value="Ribosomal Protein S4 Delta 41, Chain A, domain 1"/>
    <property type="match status" value="1"/>
</dbReference>
<dbReference type="Gene3D" id="3.10.290.10">
    <property type="entry name" value="RNA-binding S4 domain"/>
    <property type="match status" value="1"/>
</dbReference>
<dbReference type="HAMAP" id="MF_01306_B">
    <property type="entry name" value="Ribosomal_uS4_B"/>
    <property type="match status" value="1"/>
</dbReference>
<dbReference type="InterPro" id="IPR022801">
    <property type="entry name" value="Ribosomal_uS4"/>
</dbReference>
<dbReference type="InterPro" id="IPR005709">
    <property type="entry name" value="Ribosomal_uS4_bac-type"/>
</dbReference>
<dbReference type="InterPro" id="IPR018079">
    <property type="entry name" value="Ribosomal_uS4_CS"/>
</dbReference>
<dbReference type="InterPro" id="IPR001912">
    <property type="entry name" value="Ribosomal_uS4_N"/>
</dbReference>
<dbReference type="InterPro" id="IPR002942">
    <property type="entry name" value="S4_RNA-bd"/>
</dbReference>
<dbReference type="InterPro" id="IPR036986">
    <property type="entry name" value="S4_RNA-bd_sf"/>
</dbReference>
<dbReference type="NCBIfam" id="NF003717">
    <property type="entry name" value="PRK05327.1"/>
    <property type="match status" value="1"/>
</dbReference>
<dbReference type="NCBIfam" id="TIGR01017">
    <property type="entry name" value="rpsD_bact"/>
    <property type="match status" value="1"/>
</dbReference>
<dbReference type="PANTHER" id="PTHR11831">
    <property type="entry name" value="30S 40S RIBOSOMAL PROTEIN"/>
    <property type="match status" value="1"/>
</dbReference>
<dbReference type="PANTHER" id="PTHR11831:SF4">
    <property type="entry name" value="SMALL RIBOSOMAL SUBUNIT PROTEIN US4M"/>
    <property type="match status" value="1"/>
</dbReference>
<dbReference type="Pfam" id="PF00163">
    <property type="entry name" value="Ribosomal_S4"/>
    <property type="match status" value="1"/>
</dbReference>
<dbReference type="Pfam" id="PF01479">
    <property type="entry name" value="S4"/>
    <property type="match status" value="1"/>
</dbReference>
<dbReference type="SMART" id="SM01390">
    <property type="entry name" value="Ribosomal_S4"/>
    <property type="match status" value="1"/>
</dbReference>
<dbReference type="SMART" id="SM00363">
    <property type="entry name" value="S4"/>
    <property type="match status" value="1"/>
</dbReference>
<dbReference type="SUPFAM" id="SSF55174">
    <property type="entry name" value="Alpha-L RNA-binding motif"/>
    <property type="match status" value="1"/>
</dbReference>
<dbReference type="PROSITE" id="PS00632">
    <property type="entry name" value="RIBOSOMAL_S4"/>
    <property type="match status" value="1"/>
</dbReference>
<dbReference type="PROSITE" id="PS50889">
    <property type="entry name" value="S4"/>
    <property type="match status" value="1"/>
</dbReference>
<keyword id="KW-0687">Ribonucleoprotein</keyword>
<keyword id="KW-0689">Ribosomal protein</keyword>
<keyword id="KW-0694">RNA-binding</keyword>
<keyword id="KW-0699">rRNA-binding</keyword>
<organism>
    <name type="scientific">Clavibacter michiganensis subsp. michiganensis (strain NCPPB 382)</name>
    <dbReference type="NCBI Taxonomy" id="443906"/>
    <lineage>
        <taxon>Bacteria</taxon>
        <taxon>Bacillati</taxon>
        <taxon>Actinomycetota</taxon>
        <taxon>Actinomycetes</taxon>
        <taxon>Micrococcales</taxon>
        <taxon>Microbacteriaceae</taxon>
        <taxon>Clavibacter</taxon>
    </lineage>
</organism>
<protein>
    <recommendedName>
        <fullName evidence="1">Small ribosomal subunit protein uS4</fullName>
    </recommendedName>
    <alternativeName>
        <fullName evidence="3">30S ribosomal protein S4</fullName>
    </alternativeName>
</protein>
<comment type="function">
    <text evidence="1">One of the primary rRNA binding proteins, it binds directly to 16S rRNA where it nucleates assembly of the body of the 30S subunit.</text>
</comment>
<comment type="function">
    <text evidence="1">With S5 and S12 plays an important role in translational accuracy.</text>
</comment>
<comment type="subunit">
    <text evidence="1">Part of the 30S ribosomal subunit. Contacts protein S5. The interaction surface between S4 and S5 is involved in control of translational fidelity.</text>
</comment>
<comment type="similarity">
    <text evidence="1">Belongs to the universal ribosomal protein uS4 family.</text>
</comment>
<sequence length="209" mass="23653">MSTKSRTRSKTRLSRALGIPLTPKAAKYLEKRPYAPGEHGRSKRKQDSDYAVRLREKQRLRAQYGIREAQLKIAFQEARRTQGLTGENLVEILEQRLDALVVRSGLARTTAQARQLVVHRHIMVDGKIVDRPSFRVKAGQMIHVKPRSEGTEPFQVAAAGGHADVLPKLPSYLEVELDKLQARLVRLPKRAEVPVTCEVQLVVEYYAAR</sequence>
<feature type="chain" id="PRO_0000322285" description="Small ribosomal subunit protein uS4">
    <location>
        <begin position="1"/>
        <end position="209"/>
    </location>
</feature>
<feature type="domain" description="S4 RNA-binding" evidence="1">
    <location>
        <begin position="95"/>
        <end position="176"/>
    </location>
</feature>
<feature type="region of interest" description="Disordered" evidence="2">
    <location>
        <begin position="1"/>
        <end position="20"/>
    </location>
</feature>
<feature type="region of interest" description="Disordered" evidence="2">
    <location>
        <begin position="28"/>
        <end position="49"/>
    </location>
</feature>
<feature type="compositionally biased region" description="Basic residues" evidence="2">
    <location>
        <begin position="1"/>
        <end position="13"/>
    </location>
</feature>
<reference key="1">
    <citation type="journal article" date="2008" name="J. Bacteriol.">
        <title>The genome sequence of the tomato-pathogenic actinomycete Clavibacter michiganensis subsp. michiganensis NCPPB382 reveals a large island involved in pathogenicity.</title>
        <authorList>
            <person name="Gartemann K.-H."/>
            <person name="Abt B."/>
            <person name="Bekel T."/>
            <person name="Burger A."/>
            <person name="Engemann J."/>
            <person name="Fluegel M."/>
            <person name="Gaigalat L."/>
            <person name="Goesmann A."/>
            <person name="Graefen I."/>
            <person name="Kalinowski J."/>
            <person name="Kaup O."/>
            <person name="Kirchner O."/>
            <person name="Krause L."/>
            <person name="Linke B."/>
            <person name="McHardy A."/>
            <person name="Meyer F."/>
            <person name="Pohle S."/>
            <person name="Rueckert C."/>
            <person name="Schneiker S."/>
            <person name="Zellermann E.-M."/>
            <person name="Puehler A."/>
            <person name="Eichenlaub R."/>
            <person name="Kaiser O."/>
            <person name="Bartels D."/>
        </authorList>
    </citation>
    <scope>NUCLEOTIDE SEQUENCE [LARGE SCALE GENOMIC DNA]</scope>
    <source>
        <strain>NCPPB 382</strain>
    </source>
</reference>
<evidence type="ECO:0000255" key="1">
    <source>
        <dbReference type="HAMAP-Rule" id="MF_01306"/>
    </source>
</evidence>
<evidence type="ECO:0000256" key="2">
    <source>
        <dbReference type="SAM" id="MobiDB-lite"/>
    </source>
</evidence>
<evidence type="ECO:0000305" key="3"/>